<organism>
    <name type="scientific">Erythrobacter litoralis (strain HTCC2594)</name>
    <dbReference type="NCBI Taxonomy" id="314225"/>
    <lineage>
        <taxon>Bacteria</taxon>
        <taxon>Pseudomonadati</taxon>
        <taxon>Pseudomonadota</taxon>
        <taxon>Alphaproteobacteria</taxon>
        <taxon>Sphingomonadales</taxon>
        <taxon>Erythrobacteraceae</taxon>
        <taxon>Erythrobacter/Porphyrobacter group</taxon>
        <taxon>Erythrobacter</taxon>
    </lineage>
</organism>
<feature type="chain" id="PRO_0000325638" description="Uroporphyrinogen decarboxylase">
    <location>
        <begin position="1"/>
        <end position="341"/>
    </location>
</feature>
<feature type="binding site" evidence="1">
    <location>
        <begin position="23"/>
        <end position="27"/>
    </location>
    <ligand>
        <name>substrate</name>
    </ligand>
</feature>
<feature type="binding site" evidence="1">
    <location>
        <position position="73"/>
    </location>
    <ligand>
        <name>substrate</name>
    </ligand>
</feature>
<feature type="binding site" evidence="1">
    <location>
        <position position="147"/>
    </location>
    <ligand>
        <name>substrate</name>
    </ligand>
</feature>
<feature type="binding site" evidence="1">
    <location>
        <position position="202"/>
    </location>
    <ligand>
        <name>substrate</name>
    </ligand>
</feature>
<feature type="binding site" evidence="1">
    <location>
        <position position="318"/>
    </location>
    <ligand>
        <name>substrate</name>
    </ligand>
</feature>
<feature type="site" description="Transition state stabilizer" evidence="1">
    <location>
        <position position="73"/>
    </location>
</feature>
<name>DCUP_ERYLH</name>
<proteinExistence type="inferred from homology"/>
<sequence>MPGLLLDTLNRTRSDRVPLWLMRQAGRYLPEYRELRARKGGFLELVYDSEAAREVTLQPIRRFGFDGAILFSDILIVPHALGQKLEFLAGEGPHLSPRLADAELEALSTVPERLDAIYETVRQVRAALDPETTLLGFAGSPWTVATYMVAGEGSRDQQAARSMAYTDPGKLQAIVDAIIDLTVEYLVGQIDAGAEAVQLFDSWAGSLAPDQFERWVIAPNAAIVRRLKEARPDALVIGFPKGAGAKLSAYAAGTGVDAIALDETIDPAWAHTVLPDGMPVQGNLDPLQILAGGDAMVERTKAILGALADRPHVFNLGHGIDKHTPIGHVERLVDTVRNWQR</sequence>
<accession>Q2N6J8</accession>
<keyword id="KW-0963">Cytoplasm</keyword>
<keyword id="KW-0210">Decarboxylase</keyword>
<keyword id="KW-0456">Lyase</keyword>
<keyword id="KW-0627">Porphyrin biosynthesis</keyword>
<keyword id="KW-1185">Reference proteome</keyword>
<gene>
    <name evidence="1" type="primary">hemE</name>
    <name type="ordered locus">ELI_13005</name>
</gene>
<protein>
    <recommendedName>
        <fullName evidence="1">Uroporphyrinogen decarboxylase</fullName>
        <shortName evidence="1">UPD</shortName>
        <shortName evidence="1">URO-D</shortName>
        <ecNumber evidence="1">4.1.1.37</ecNumber>
    </recommendedName>
</protein>
<reference key="1">
    <citation type="journal article" date="2009" name="J. Bacteriol.">
        <title>Complete genome sequence of Erythrobacter litoralis HTCC2594.</title>
        <authorList>
            <person name="Oh H.M."/>
            <person name="Giovannoni S.J."/>
            <person name="Ferriera S."/>
            <person name="Johnson J."/>
            <person name="Cho J.C."/>
        </authorList>
    </citation>
    <scope>NUCLEOTIDE SEQUENCE [LARGE SCALE GENOMIC DNA]</scope>
    <source>
        <strain>HTCC2594</strain>
    </source>
</reference>
<dbReference type="EC" id="4.1.1.37" evidence="1"/>
<dbReference type="EMBL" id="CP000157">
    <property type="protein sequence ID" value="ABC64693.1"/>
    <property type="molecule type" value="Genomic_DNA"/>
</dbReference>
<dbReference type="RefSeq" id="WP_011415515.1">
    <property type="nucleotide sequence ID" value="NC_007722.1"/>
</dbReference>
<dbReference type="SMR" id="Q2N6J8"/>
<dbReference type="STRING" id="314225.ELI_13005"/>
<dbReference type="KEGG" id="eli:ELI_13005"/>
<dbReference type="eggNOG" id="COG0407">
    <property type="taxonomic scope" value="Bacteria"/>
</dbReference>
<dbReference type="HOGENOM" id="CLU_040933_0_0_5"/>
<dbReference type="OrthoDB" id="9806656at2"/>
<dbReference type="UniPathway" id="UPA00251">
    <property type="reaction ID" value="UER00321"/>
</dbReference>
<dbReference type="Proteomes" id="UP000008808">
    <property type="component" value="Chromosome"/>
</dbReference>
<dbReference type="GO" id="GO:0005829">
    <property type="term" value="C:cytosol"/>
    <property type="evidence" value="ECO:0007669"/>
    <property type="project" value="TreeGrafter"/>
</dbReference>
<dbReference type="GO" id="GO:0004853">
    <property type="term" value="F:uroporphyrinogen decarboxylase activity"/>
    <property type="evidence" value="ECO:0007669"/>
    <property type="project" value="UniProtKB-UniRule"/>
</dbReference>
<dbReference type="GO" id="GO:0019353">
    <property type="term" value="P:protoporphyrinogen IX biosynthetic process from glutamate"/>
    <property type="evidence" value="ECO:0007669"/>
    <property type="project" value="TreeGrafter"/>
</dbReference>
<dbReference type="CDD" id="cd00717">
    <property type="entry name" value="URO-D"/>
    <property type="match status" value="1"/>
</dbReference>
<dbReference type="Gene3D" id="3.20.20.210">
    <property type="match status" value="1"/>
</dbReference>
<dbReference type="HAMAP" id="MF_00218">
    <property type="entry name" value="URO_D"/>
    <property type="match status" value="1"/>
</dbReference>
<dbReference type="InterPro" id="IPR038071">
    <property type="entry name" value="UROD/MetE-like_sf"/>
</dbReference>
<dbReference type="InterPro" id="IPR006361">
    <property type="entry name" value="Uroporphyrinogen_deCO2ase_HemE"/>
</dbReference>
<dbReference type="InterPro" id="IPR000257">
    <property type="entry name" value="Uroporphyrinogen_deCOase"/>
</dbReference>
<dbReference type="NCBIfam" id="TIGR01464">
    <property type="entry name" value="hemE"/>
    <property type="match status" value="1"/>
</dbReference>
<dbReference type="PANTHER" id="PTHR21091">
    <property type="entry name" value="METHYLTETRAHYDROFOLATE:HOMOCYSTEINE METHYLTRANSFERASE RELATED"/>
    <property type="match status" value="1"/>
</dbReference>
<dbReference type="PANTHER" id="PTHR21091:SF169">
    <property type="entry name" value="UROPORPHYRINOGEN DECARBOXYLASE"/>
    <property type="match status" value="1"/>
</dbReference>
<dbReference type="Pfam" id="PF01208">
    <property type="entry name" value="URO-D"/>
    <property type="match status" value="1"/>
</dbReference>
<dbReference type="SUPFAM" id="SSF51726">
    <property type="entry name" value="UROD/MetE-like"/>
    <property type="match status" value="1"/>
</dbReference>
<dbReference type="PROSITE" id="PS00906">
    <property type="entry name" value="UROD_1"/>
    <property type="match status" value="1"/>
</dbReference>
<dbReference type="PROSITE" id="PS00907">
    <property type="entry name" value="UROD_2"/>
    <property type="match status" value="1"/>
</dbReference>
<evidence type="ECO:0000255" key="1">
    <source>
        <dbReference type="HAMAP-Rule" id="MF_00218"/>
    </source>
</evidence>
<comment type="function">
    <text evidence="1">Catalyzes the decarboxylation of four acetate groups of uroporphyrinogen-III to yield coproporphyrinogen-III.</text>
</comment>
<comment type="catalytic activity">
    <reaction evidence="1">
        <text>uroporphyrinogen III + 4 H(+) = coproporphyrinogen III + 4 CO2</text>
        <dbReference type="Rhea" id="RHEA:19865"/>
        <dbReference type="ChEBI" id="CHEBI:15378"/>
        <dbReference type="ChEBI" id="CHEBI:16526"/>
        <dbReference type="ChEBI" id="CHEBI:57308"/>
        <dbReference type="ChEBI" id="CHEBI:57309"/>
        <dbReference type="EC" id="4.1.1.37"/>
    </reaction>
</comment>
<comment type="pathway">
    <text evidence="1">Porphyrin-containing compound metabolism; protoporphyrin-IX biosynthesis; coproporphyrinogen-III from 5-aminolevulinate: step 4/4.</text>
</comment>
<comment type="subunit">
    <text evidence="1">Homodimer.</text>
</comment>
<comment type="subcellular location">
    <subcellularLocation>
        <location evidence="1">Cytoplasm</location>
    </subcellularLocation>
</comment>
<comment type="similarity">
    <text evidence="1">Belongs to the uroporphyrinogen decarboxylase family.</text>
</comment>